<comment type="function">
    <text evidence="1">Conversion of NADPH, generated by peripheral catabolic pathways, to NADH, which can enter the respiratory chain for energy generation.</text>
</comment>
<comment type="catalytic activity">
    <reaction evidence="1">
        <text>NAD(+) + NADPH = NADH + NADP(+)</text>
        <dbReference type="Rhea" id="RHEA:11692"/>
        <dbReference type="ChEBI" id="CHEBI:57540"/>
        <dbReference type="ChEBI" id="CHEBI:57783"/>
        <dbReference type="ChEBI" id="CHEBI:57945"/>
        <dbReference type="ChEBI" id="CHEBI:58349"/>
        <dbReference type="EC" id="1.6.1.1"/>
    </reaction>
</comment>
<comment type="cofactor">
    <cofactor evidence="1">
        <name>FAD</name>
        <dbReference type="ChEBI" id="CHEBI:57692"/>
    </cofactor>
    <text evidence="1">Binds 1 FAD per subunit.</text>
</comment>
<comment type="subcellular location">
    <subcellularLocation>
        <location evidence="1">Cytoplasm</location>
    </subcellularLocation>
</comment>
<comment type="similarity">
    <text evidence="1">Belongs to the class-I pyridine nucleotide-disulfide oxidoreductase family.</text>
</comment>
<reference key="1">
    <citation type="journal article" date="2009" name="PLoS Genet.">
        <title>Organised genome dynamics in the Escherichia coli species results in highly diverse adaptive paths.</title>
        <authorList>
            <person name="Touchon M."/>
            <person name="Hoede C."/>
            <person name="Tenaillon O."/>
            <person name="Barbe V."/>
            <person name="Baeriswyl S."/>
            <person name="Bidet P."/>
            <person name="Bingen E."/>
            <person name="Bonacorsi S."/>
            <person name="Bouchier C."/>
            <person name="Bouvet O."/>
            <person name="Calteau A."/>
            <person name="Chiapello H."/>
            <person name="Clermont O."/>
            <person name="Cruveiller S."/>
            <person name="Danchin A."/>
            <person name="Diard M."/>
            <person name="Dossat C."/>
            <person name="Karoui M.E."/>
            <person name="Frapy E."/>
            <person name="Garry L."/>
            <person name="Ghigo J.M."/>
            <person name="Gilles A.M."/>
            <person name="Johnson J."/>
            <person name="Le Bouguenec C."/>
            <person name="Lescat M."/>
            <person name="Mangenot S."/>
            <person name="Martinez-Jehanne V."/>
            <person name="Matic I."/>
            <person name="Nassif X."/>
            <person name="Oztas S."/>
            <person name="Petit M.A."/>
            <person name="Pichon C."/>
            <person name="Rouy Z."/>
            <person name="Ruf C.S."/>
            <person name="Schneider D."/>
            <person name="Tourret J."/>
            <person name="Vacherie B."/>
            <person name="Vallenet D."/>
            <person name="Medigue C."/>
            <person name="Rocha E.P.C."/>
            <person name="Denamur E."/>
        </authorList>
    </citation>
    <scope>NUCLEOTIDE SEQUENCE [LARGE SCALE GENOMIC DNA]</scope>
    <source>
        <strain>ATCC 35469 / DSM 13698 / BCRC 15582 / CCUG 18766 / IAM 14443 / JCM 21226 / LMG 7866 / NBRC 102419 / NCTC 12128 / CDC 0568-73</strain>
    </source>
</reference>
<protein>
    <recommendedName>
        <fullName evidence="1">Soluble pyridine nucleotide transhydrogenase</fullName>
        <shortName evidence="1">STH</shortName>
        <ecNumber evidence="1">1.6.1.1</ecNumber>
    </recommendedName>
    <alternativeName>
        <fullName evidence="1">NAD(P)(+) transhydrogenase [B-specific]</fullName>
    </alternativeName>
</protein>
<evidence type="ECO:0000255" key="1">
    <source>
        <dbReference type="HAMAP-Rule" id="MF_00247"/>
    </source>
</evidence>
<dbReference type="EC" id="1.6.1.1" evidence="1"/>
<dbReference type="EMBL" id="CU928158">
    <property type="protein sequence ID" value="CAQ91236.1"/>
    <property type="molecule type" value="Genomic_DNA"/>
</dbReference>
<dbReference type="RefSeq" id="WP_001120810.1">
    <property type="nucleotide sequence ID" value="NC_011740.1"/>
</dbReference>
<dbReference type="SMR" id="B7LUN3"/>
<dbReference type="GeneID" id="75203206"/>
<dbReference type="KEGG" id="efe:EFER_3800"/>
<dbReference type="HOGENOM" id="CLU_016755_0_0_6"/>
<dbReference type="OrthoDB" id="9800167at2"/>
<dbReference type="Proteomes" id="UP000000745">
    <property type="component" value="Chromosome"/>
</dbReference>
<dbReference type="GO" id="GO:0005829">
    <property type="term" value="C:cytosol"/>
    <property type="evidence" value="ECO:0007669"/>
    <property type="project" value="TreeGrafter"/>
</dbReference>
<dbReference type="GO" id="GO:0004148">
    <property type="term" value="F:dihydrolipoyl dehydrogenase (NADH) activity"/>
    <property type="evidence" value="ECO:0007669"/>
    <property type="project" value="TreeGrafter"/>
</dbReference>
<dbReference type="GO" id="GO:0050660">
    <property type="term" value="F:flavin adenine dinucleotide binding"/>
    <property type="evidence" value="ECO:0007669"/>
    <property type="project" value="TreeGrafter"/>
</dbReference>
<dbReference type="GO" id="GO:0003957">
    <property type="term" value="F:NAD(P)+ transhydrogenase (Si-specific) activity"/>
    <property type="evidence" value="ECO:0007669"/>
    <property type="project" value="UniProtKB-UniRule"/>
</dbReference>
<dbReference type="GO" id="GO:0006103">
    <property type="term" value="P:2-oxoglutarate metabolic process"/>
    <property type="evidence" value="ECO:0007669"/>
    <property type="project" value="TreeGrafter"/>
</dbReference>
<dbReference type="GO" id="GO:0006739">
    <property type="term" value="P:NADP metabolic process"/>
    <property type="evidence" value="ECO:0007669"/>
    <property type="project" value="UniProtKB-UniRule"/>
</dbReference>
<dbReference type="FunFam" id="3.30.390.30:FF:000002">
    <property type="entry name" value="Soluble pyridine nucleotide transhydrogenase"/>
    <property type="match status" value="1"/>
</dbReference>
<dbReference type="FunFam" id="3.50.50.60:FF:000008">
    <property type="entry name" value="Soluble pyridine nucleotide transhydrogenase"/>
    <property type="match status" value="1"/>
</dbReference>
<dbReference type="Gene3D" id="3.30.390.30">
    <property type="match status" value="1"/>
</dbReference>
<dbReference type="Gene3D" id="3.50.50.60">
    <property type="entry name" value="FAD/NAD(P)-binding domain"/>
    <property type="match status" value="2"/>
</dbReference>
<dbReference type="HAMAP" id="MF_00247">
    <property type="entry name" value="SthA"/>
    <property type="match status" value="1"/>
</dbReference>
<dbReference type="InterPro" id="IPR050151">
    <property type="entry name" value="Class-I_Pyr_Nuc-Dis_Oxidored"/>
</dbReference>
<dbReference type="InterPro" id="IPR036188">
    <property type="entry name" value="FAD/NAD-bd_sf"/>
</dbReference>
<dbReference type="InterPro" id="IPR023753">
    <property type="entry name" value="FAD/NAD-binding_dom"/>
</dbReference>
<dbReference type="InterPro" id="IPR016156">
    <property type="entry name" value="FAD/NAD-linked_Rdtase_dimer_sf"/>
</dbReference>
<dbReference type="InterPro" id="IPR001100">
    <property type="entry name" value="Pyr_nuc-diS_OxRdtase"/>
</dbReference>
<dbReference type="InterPro" id="IPR004099">
    <property type="entry name" value="Pyr_nucl-diS_OxRdtase_dimer"/>
</dbReference>
<dbReference type="InterPro" id="IPR022962">
    <property type="entry name" value="STH_gammaproteobact"/>
</dbReference>
<dbReference type="NCBIfam" id="NF003585">
    <property type="entry name" value="PRK05249.1"/>
    <property type="match status" value="1"/>
</dbReference>
<dbReference type="PANTHER" id="PTHR22912">
    <property type="entry name" value="DISULFIDE OXIDOREDUCTASE"/>
    <property type="match status" value="1"/>
</dbReference>
<dbReference type="PANTHER" id="PTHR22912:SF93">
    <property type="entry name" value="SOLUBLE PYRIDINE NUCLEOTIDE TRANSHYDROGENASE"/>
    <property type="match status" value="1"/>
</dbReference>
<dbReference type="Pfam" id="PF07992">
    <property type="entry name" value="Pyr_redox_2"/>
    <property type="match status" value="1"/>
</dbReference>
<dbReference type="Pfam" id="PF02852">
    <property type="entry name" value="Pyr_redox_dim"/>
    <property type="match status" value="1"/>
</dbReference>
<dbReference type="PIRSF" id="PIRSF000350">
    <property type="entry name" value="Mercury_reductase_MerA"/>
    <property type="match status" value="1"/>
</dbReference>
<dbReference type="PRINTS" id="PR00368">
    <property type="entry name" value="FADPNR"/>
</dbReference>
<dbReference type="PRINTS" id="PR00411">
    <property type="entry name" value="PNDRDTASEI"/>
</dbReference>
<dbReference type="SUPFAM" id="SSF51905">
    <property type="entry name" value="FAD/NAD(P)-binding domain"/>
    <property type="match status" value="1"/>
</dbReference>
<dbReference type="SUPFAM" id="SSF55424">
    <property type="entry name" value="FAD/NAD-linked reductases, dimerisation (C-terminal) domain"/>
    <property type="match status" value="1"/>
</dbReference>
<organism>
    <name type="scientific">Escherichia fergusonii (strain ATCC 35469 / DSM 13698 / CCUG 18766 / IAM 14443 / JCM 21226 / LMG 7866 / NBRC 102419 / NCTC 12128 / CDC 0568-73)</name>
    <dbReference type="NCBI Taxonomy" id="585054"/>
    <lineage>
        <taxon>Bacteria</taxon>
        <taxon>Pseudomonadati</taxon>
        <taxon>Pseudomonadota</taxon>
        <taxon>Gammaproteobacteria</taxon>
        <taxon>Enterobacterales</taxon>
        <taxon>Enterobacteriaceae</taxon>
        <taxon>Escherichia</taxon>
    </lineage>
</organism>
<name>STHA_ESCF3</name>
<accession>B7LUN3</accession>
<keyword id="KW-0963">Cytoplasm</keyword>
<keyword id="KW-0274">FAD</keyword>
<keyword id="KW-0285">Flavoprotein</keyword>
<keyword id="KW-0520">NAD</keyword>
<keyword id="KW-0521">NADP</keyword>
<keyword id="KW-0560">Oxidoreductase</keyword>
<proteinExistence type="inferred from homology"/>
<sequence>MPHSYDYDAIVIGSGPGGEGAAMGLVKQGARVAVIERYQNVGGGCTHWGTIPSKALRHAVSRIIEFNQNPLYSDHSRLLRSSFADILNHADNVINQQTRMRQGFYERNHCEILQGNARFVDEHTLALDCPDGSVETLTAEKFVIACGSRPYHPTDVDFTHPRIYDSDSILSMHHEPRHVLIYGAGVIGCEYASIFRGMDVKVDLINTRDRLLAFLDQEMSDSLSYHFWNSGVVIRHNEEYEKIEGCDDGVIMHLKSGKKLKADCLLYANGRTGNTDSLALQNIGLETDSRGQLKVNSMYQTAQPHVYAVGDVIGYPSLASAAYDQGRIAAQALVKGEATAHLIEDIPTGIYTIPEISSVGKTEQQLTAMKVPYEVGRAQFKHLARAQIVGMNVGTLKILFHRETKEILGIHCFGERAAEIIHIGQAIMEQKGGGNTIEYFVNTTFNYPTMAEAYRVAALNGLNRLF</sequence>
<gene>
    <name evidence="1" type="primary">sthA</name>
    <name evidence="1" type="synonym">udhA</name>
    <name type="ordered locus">EFER_3800</name>
</gene>
<feature type="chain" id="PRO_1000193456" description="Soluble pyridine nucleotide transhydrogenase">
    <location>
        <begin position="1"/>
        <end position="466"/>
    </location>
</feature>
<feature type="binding site" evidence="1">
    <location>
        <begin position="36"/>
        <end position="45"/>
    </location>
    <ligand>
        <name>FAD</name>
        <dbReference type="ChEBI" id="CHEBI:57692"/>
    </ligand>
</feature>